<comment type="function">
    <text evidence="1">Participates actively in the response to hyperosmotic and heat shock by preventing the aggregation of stress-denatured proteins and by disaggregating proteins, also in an autonomous, DnaK-independent fashion. Unfolded proteins bind initially to DnaJ; upon interaction with the DnaJ-bound protein, DnaK hydrolyzes its bound ATP, resulting in the formation of a stable complex. GrpE releases ADP from DnaK; ATP binding to DnaK triggers the release of the substrate protein, thus completing the reaction cycle. Several rounds of ATP-dependent interactions between DnaJ, DnaK and GrpE are required for fully efficient folding. Also involved, together with DnaK and GrpE, in the DNA replication of plasmids through activation of initiation proteins.</text>
</comment>
<comment type="cofactor">
    <cofactor evidence="1">
        <name>Zn(2+)</name>
        <dbReference type="ChEBI" id="CHEBI:29105"/>
    </cofactor>
    <text evidence="1">Binds 2 Zn(2+) ions per monomer.</text>
</comment>
<comment type="subunit">
    <text evidence="1">Homodimer.</text>
</comment>
<comment type="subcellular location">
    <subcellularLocation>
        <location evidence="1">Cytoplasm</location>
    </subcellularLocation>
</comment>
<comment type="domain">
    <text evidence="1">The J domain is necessary and sufficient to stimulate DnaK ATPase activity. Zinc center 1 plays an important role in the autonomous, DnaK-independent chaperone activity of DnaJ. Zinc center 2 is essential for interaction with DnaK and for DnaJ activity.</text>
</comment>
<comment type="similarity">
    <text evidence="1">Belongs to the DnaJ family.</text>
</comment>
<organism>
    <name type="scientific">Cronobacter sakazakii (strain ATCC BAA-894)</name>
    <name type="common">Enterobacter sakazakii</name>
    <dbReference type="NCBI Taxonomy" id="290339"/>
    <lineage>
        <taxon>Bacteria</taxon>
        <taxon>Pseudomonadati</taxon>
        <taxon>Pseudomonadota</taxon>
        <taxon>Gammaproteobacteria</taxon>
        <taxon>Enterobacterales</taxon>
        <taxon>Enterobacteriaceae</taxon>
        <taxon>Cronobacter</taxon>
    </lineage>
</organism>
<accession>A7MIK3</accession>
<sequence>MAKKDYYEILGVPKTADEREIKKAYKRLAMKFHPDRNQGDKEAEAKFKEIKEAYEILTDAQKRAAYDQYGHAAFEQGGMGGGGFGGGFGNGADFSDIFGDVFGDIFGGGRGRRASRGADLRYNMELTLEEAVRGVTKEIRIPTLEECEVCHGSGAKPGSQPQTCPTCHGAGQVQMRQGFFAVQQTCPHCQGRGTLIKDPCNSCHGHGRIEKTKTLSVKIPAGVDTGDRIRLAGEGEAGEQGAPAGDLYVQVQVKQHPIFEREGNNLYCEVPINFAMAALGGEIEVPTLDGRVMLKVPSETQTGKLFRMRGKGVKSVRGGAQGDLLCRVVVETPVGLNDRQKALLQELQESFGGPTGEKNSPRSKSFFDGVKKFFDDLTR</sequence>
<keyword id="KW-0143">Chaperone</keyword>
<keyword id="KW-0963">Cytoplasm</keyword>
<keyword id="KW-0235">DNA replication</keyword>
<keyword id="KW-0479">Metal-binding</keyword>
<keyword id="KW-1185">Reference proteome</keyword>
<keyword id="KW-0677">Repeat</keyword>
<keyword id="KW-0346">Stress response</keyword>
<keyword id="KW-0862">Zinc</keyword>
<keyword id="KW-0863">Zinc-finger</keyword>
<feature type="chain" id="PRO_1000085194" description="Chaperone protein DnaJ">
    <location>
        <begin position="1"/>
        <end position="379"/>
    </location>
</feature>
<feature type="domain" description="J" evidence="1">
    <location>
        <begin position="5"/>
        <end position="70"/>
    </location>
</feature>
<feature type="repeat" description="CXXCXGXG motif">
    <location>
        <begin position="147"/>
        <end position="154"/>
    </location>
</feature>
<feature type="repeat" description="CXXCXGXG motif">
    <location>
        <begin position="164"/>
        <end position="171"/>
    </location>
</feature>
<feature type="repeat" description="CXXCXGXG motif">
    <location>
        <begin position="186"/>
        <end position="193"/>
    </location>
</feature>
<feature type="repeat" description="CXXCXGXG motif">
    <location>
        <begin position="200"/>
        <end position="207"/>
    </location>
</feature>
<feature type="zinc finger region" description="CR-type" evidence="1">
    <location>
        <begin position="134"/>
        <end position="212"/>
    </location>
</feature>
<feature type="binding site" evidence="1">
    <location>
        <position position="147"/>
    </location>
    <ligand>
        <name>Zn(2+)</name>
        <dbReference type="ChEBI" id="CHEBI:29105"/>
        <label>1</label>
    </ligand>
</feature>
<feature type="binding site" evidence="1">
    <location>
        <position position="150"/>
    </location>
    <ligand>
        <name>Zn(2+)</name>
        <dbReference type="ChEBI" id="CHEBI:29105"/>
        <label>1</label>
    </ligand>
</feature>
<feature type="binding site" evidence="1">
    <location>
        <position position="164"/>
    </location>
    <ligand>
        <name>Zn(2+)</name>
        <dbReference type="ChEBI" id="CHEBI:29105"/>
        <label>2</label>
    </ligand>
</feature>
<feature type="binding site" evidence="1">
    <location>
        <position position="167"/>
    </location>
    <ligand>
        <name>Zn(2+)</name>
        <dbReference type="ChEBI" id="CHEBI:29105"/>
        <label>2</label>
    </ligand>
</feature>
<feature type="binding site" evidence="1">
    <location>
        <position position="186"/>
    </location>
    <ligand>
        <name>Zn(2+)</name>
        <dbReference type="ChEBI" id="CHEBI:29105"/>
        <label>2</label>
    </ligand>
</feature>
<feature type="binding site" evidence="1">
    <location>
        <position position="189"/>
    </location>
    <ligand>
        <name>Zn(2+)</name>
        <dbReference type="ChEBI" id="CHEBI:29105"/>
        <label>2</label>
    </ligand>
</feature>
<feature type="binding site" evidence="1">
    <location>
        <position position="200"/>
    </location>
    <ligand>
        <name>Zn(2+)</name>
        <dbReference type="ChEBI" id="CHEBI:29105"/>
        <label>1</label>
    </ligand>
</feature>
<feature type="binding site" evidence="1">
    <location>
        <position position="203"/>
    </location>
    <ligand>
        <name>Zn(2+)</name>
        <dbReference type="ChEBI" id="CHEBI:29105"/>
        <label>1</label>
    </ligand>
</feature>
<dbReference type="EMBL" id="CP000783">
    <property type="protein sequence ID" value="ABU78545.1"/>
    <property type="molecule type" value="Genomic_DNA"/>
</dbReference>
<dbReference type="RefSeq" id="WP_004386268.1">
    <property type="nucleotide sequence ID" value="NC_009778.1"/>
</dbReference>
<dbReference type="SMR" id="A7MIK3"/>
<dbReference type="GeneID" id="56732006"/>
<dbReference type="KEGG" id="esa:ESA_03324"/>
<dbReference type="HOGENOM" id="CLU_017633_0_7_6"/>
<dbReference type="Proteomes" id="UP000000260">
    <property type="component" value="Chromosome"/>
</dbReference>
<dbReference type="GO" id="GO:0005737">
    <property type="term" value="C:cytoplasm"/>
    <property type="evidence" value="ECO:0007669"/>
    <property type="project" value="UniProtKB-SubCell"/>
</dbReference>
<dbReference type="GO" id="GO:0005524">
    <property type="term" value="F:ATP binding"/>
    <property type="evidence" value="ECO:0007669"/>
    <property type="project" value="InterPro"/>
</dbReference>
<dbReference type="GO" id="GO:0031072">
    <property type="term" value="F:heat shock protein binding"/>
    <property type="evidence" value="ECO:0007669"/>
    <property type="project" value="InterPro"/>
</dbReference>
<dbReference type="GO" id="GO:0051082">
    <property type="term" value="F:unfolded protein binding"/>
    <property type="evidence" value="ECO:0007669"/>
    <property type="project" value="UniProtKB-UniRule"/>
</dbReference>
<dbReference type="GO" id="GO:0008270">
    <property type="term" value="F:zinc ion binding"/>
    <property type="evidence" value="ECO:0007669"/>
    <property type="project" value="UniProtKB-UniRule"/>
</dbReference>
<dbReference type="GO" id="GO:0051085">
    <property type="term" value="P:chaperone cofactor-dependent protein refolding"/>
    <property type="evidence" value="ECO:0007669"/>
    <property type="project" value="TreeGrafter"/>
</dbReference>
<dbReference type="GO" id="GO:0006260">
    <property type="term" value="P:DNA replication"/>
    <property type="evidence" value="ECO:0007669"/>
    <property type="project" value="UniProtKB-KW"/>
</dbReference>
<dbReference type="GO" id="GO:0042026">
    <property type="term" value="P:protein refolding"/>
    <property type="evidence" value="ECO:0007669"/>
    <property type="project" value="TreeGrafter"/>
</dbReference>
<dbReference type="GO" id="GO:0009408">
    <property type="term" value="P:response to heat"/>
    <property type="evidence" value="ECO:0007669"/>
    <property type="project" value="InterPro"/>
</dbReference>
<dbReference type="CDD" id="cd06257">
    <property type="entry name" value="DnaJ"/>
    <property type="match status" value="1"/>
</dbReference>
<dbReference type="CDD" id="cd10747">
    <property type="entry name" value="DnaJ_C"/>
    <property type="match status" value="1"/>
</dbReference>
<dbReference type="CDD" id="cd10719">
    <property type="entry name" value="DnaJ_zf"/>
    <property type="match status" value="1"/>
</dbReference>
<dbReference type="FunFam" id="1.10.287.110:FF:000003">
    <property type="entry name" value="Molecular chaperone DnaJ"/>
    <property type="match status" value="1"/>
</dbReference>
<dbReference type="FunFam" id="2.10.230.10:FF:000002">
    <property type="entry name" value="Molecular chaperone DnaJ"/>
    <property type="match status" value="1"/>
</dbReference>
<dbReference type="FunFam" id="2.60.260.20:FF:000004">
    <property type="entry name" value="Molecular chaperone DnaJ"/>
    <property type="match status" value="1"/>
</dbReference>
<dbReference type="Gene3D" id="1.10.287.110">
    <property type="entry name" value="DnaJ domain"/>
    <property type="match status" value="1"/>
</dbReference>
<dbReference type="Gene3D" id="2.10.230.10">
    <property type="entry name" value="Heat shock protein DnaJ, cysteine-rich domain"/>
    <property type="match status" value="1"/>
</dbReference>
<dbReference type="Gene3D" id="2.60.260.20">
    <property type="entry name" value="Urease metallochaperone UreE, N-terminal domain"/>
    <property type="match status" value="2"/>
</dbReference>
<dbReference type="HAMAP" id="MF_01152">
    <property type="entry name" value="DnaJ"/>
    <property type="match status" value="1"/>
</dbReference>
<dbReference type="InterPro" id="IPR012724">
    <property type="entry name" value="DnaJ"/>
</dbReference>
<dbReference type="InterPro" id="IPR002939">
    <property type="entry name" value="DnaJ_C"/>
</dbReference>
<dbReference type="InterPro" id="IPR001623">
    <property type="entry name" value="DnaJ_domain"/>
</dbReference>
<dbReference type="InterPro" id="IPR018253">
    <property type="entry name" value="DnaJ_domain_CS"/>
</dbReference>
<dbReference type="InterPro" id="IPR008971">
    <property type="entry name" value="HSP40/DnaJ_pept-bd"/>
</dbReference>
<dbReference type="InterPro" id="IPR001305">
    <property type="entry name" value="HSP_DnaJ_Cys-rich_dom"/>
</dbReference>
<dbReference type="InterPro" id="IPR036410">
    <property type="entry name" value="HSP_DnaJ_Cys-rich_dom_sf"/>
</dbReference>
<dbReference type="InterPro" id="IPR036869">
    <property type="entry name" value="J_dom_sf"/>
</dbReference>
<dbReference type="NCBIfam" id="TIGR02349">
    <property type="entry name" value="DnaJ_bact"/>
    <property type="match status" value="1"/>
</dbReference>
<dbReference type="NCBIfam" id="NF008035">
    <property type="entry name" value="PRK10767.1"/>
    <property type="match status" value="1"/>
</dbReference>
<dbReference type="PANTHER" id="PTHR43096:SF48">
    <property type="entry name" value="CHAPERONE PROTEIN DNAJ"/>
    <property type="match status" value="1"/>
</dbReference>
<dbReference type="PANTHER" id="PTHR43096">
    <property type="entry name" value="DNAJ HOMOLOG 1, MITOCHONDRIAL-RELATED"/>
    <property type="match status" value="1"/>
</dbReference>
<dbReference type="Pfam" id="PF00226">
    <property type="entry name" value="DnaJ"/>
    <property type="match status" value="1"/>
</dbReference>
<dbReference type="Pfam" id="PF01556">
    <property type="entry name" value="DnaJ_C"/>
    <property type="match status" value="1"/>
</dbReference>
<dbReference type="Pfam" id="PF00684">
    <property type="entry name" value="DnaJ_CXXCXGXG"/>
    <property type="match status" value="1"/>
</dbReference>
<dbReference type="PRINTS" id="PR00625">
    <property type="entry name" value="JDOMAIN"/>
</dbReference>
<dbReference type="SMART" id="SM00271">
    <property type="entry name" value="DnaJ"/>
    <property type="match status" value="1"/>
</dbReference>
<dbReference type="SUPFAM" id="SSF46565">
    <property type="entry name" value="Chaperone J-domain"/>
    <property type="match status" value="1"/>
</dbReference>
<dbReference type="SUPFAM" id="SSF57938">
    <property type="entry name" value="DnaJ/Hsp40 cysteine-rich domain"/>
    <property type="match status" value="1"/>
</dbReference>
<dbReference type="SUPFAM" id="SSF49493">
    <property type="entry name" value="HSP40/DnaJ peptide-binding domain"/>
    <property type="match status" value="2"/>
</dbReference>
<dbReference type="PROSITE" id="PS00636">
    <property type="entry name" value="DNAJ_1"/>
    <property type="match status" value="1"/>
</dbReference>
<dbReference type="PROSITE" id="PS50076">
    <property type="entry name" value="DNAJ_2"/>
    <property type="match status" value="1"/>
</dbReference>
<dbReference type="PROSITE" id="PS51188">
    <property type="entry name" value="ZF_CR"/>
    <property type="match status" value="1"/>
</dbReference>
<evidence type="ECO:0000255" key="1">
    <source>
        <dbReference type="HAMAP-Rule" id="MF_01152"/>
    </source>
</evidence>
<reference key="1">
    <citation type="journal article" date="2010" name="PLoS ONE">
        <title>Genome sequence of Cronobacter sakazakii BAA-894 and comparative genomic hybridization analysis with other Cronobacter species.</title>
        <authorList>
            <person name="Kucerova E."/>
            <person name="Clifton S.W."/>
            <person name="Xia X.Q."/>
            <person name="Long F."/>
            <person name="Porwollik S."/>
            <person name="Fulton L."/>
            <person name="Fronick C."/>
            <person name="Minx P."/>
            <person name="Kyung K."/>
            <person name="Warren W."/>
            <person name="Fulton R."/>
            <person name="Feng D."/>
            <person name="Wollam A."/>
            <person name="Shah N."/>
            <person name="Bhonagiri V."/>
            <person name="Nash W.E."/>
            <person name="Hallsworth-Pepin K."/>
            <person name="Wilson R.K."/>
            <person name="McClelland M."/>
            <person name="Forsythe S.J."/>
        </authorList>
    </citation>
    <scope>NUCLEOTIDE SEQUENCE [LARGE SCALE GENOMIC DNA]</scope>
    <source>
        <strain>ATCC BAA-894</strain>
    </source>
</reference>
<name>DNAJ_CROS8</name>
<gene>
    <name evidence="1" type="primary">dnaJ</name>
    <name type="ordered locus">ESA_03324</name>
</gene>
<protein>
    <recommendedName>
        <fullName evidence="1">Chaperone protein DnaJ</fullName>
    </recommendedName>
</protein>
<proteinExistence type="inferred from homology"/>